<organism>
    <name type="scientific">Drosophila pseudoobscura pseudoobscura</name>
    <name type="common">Fruit fly</name>
    <dbReference type="NCBI Taxonomy" id="46245"/>
    <lineage>
        <taxon>Eukaryota</taxon>
        <taxon>Metazoa</taxon>
        <taxon>Ecdysozoa</taxon>
        <taxon>Arthropoda</taxon>
        <taxon>Hexapoda</taxon>
        <taxon>Insecta</taxon>
        <taxon>Pterygota</taxon>
        <taxon>Neoptera</taxon>
        <taxon>Endopterygota</taxon>
        <taxon>Diptera</taxon>
        <taxon>Brachycera</taxon>
        <taxon>Muscomorpha</taxon>
        <taxon>Ephydroidea</taxon>
        <taxon>Drosophilidae</taxon>
        <taxon>Drosophila</taxon>
        <taxon>Sophophora</taxon>
    </lineage>
</organism>
<feature type="chain" id="PRO_0000377424" description="WD repeat-containing protein on Y chromosome">
    <location>
        <begin position="1"/>
        <end position="1064"/>
    </location>
</feature>
<feature type="repeat" description="WD 1" evidence="2">
    <location>
        <begin position="153"/>
        <end position="197"/>
    </location>
</feature>
<feature type="repeat" description="WD 2" evidence="2">
    <location>
        <begin position="326"/>
        <end position="365"/>
    </location>
</feature>
<feature type="repeat" description="WD 3" evidence="2">
    <location>
        <begin position="369"/>
        <end position="408"/>
    </location>
</feature>
<feature type="repeat" description="WD 4" evidence="2">
    <location>
        <begin position="459"/>
        <end position="498"/>
    </location>
</feature>
<feature type="repeat" description="WD 5" evidence="2">
    <location>
        <begin position="511"/>
        <end position="550"/>
    </location>
</feature>
<feature type="repeat" description="WD 6" evidence="2">
    <location>
        <begin position="598"/>
        <end position="638"/>
    </location>
</feature>
<feature type="repeat" description="WD 7" evidence="2">
    <location>
        <begin position="746"/>
        <end position="785"/>
    </location>
</feature>
<feature type="repeat" description="WD 8" evidence="2">
    <location>
        <begin position="827"/>
        <end position="866"/>
    </location>
</feature>
<feature type="region of interest" description="Disordered" evidence="3">
    <location>
        <begin position="914"/>
        <end position="935"/>
    </location>
</feature>
<feature type="region of interest" description="Disordered" evidence="3">
    <location>
        <begin position="1023"/>
        <end position="1064"/>
    </location>
</feature>
<feature type="compositionally biased region" description="Basic and acidic residues" evidence="3">
    <location>
        <begin position="914"/>
        <end position="924"/>
    </location>
</feature>
<feature type="compositionally biased region" description="Acidic residues" evidence="3">
    <location>
        <begin position="925"/>
        <end position="935"/>
    </location>
</feature>
<dbReference type="EMBL" id="CH379059">
    <property type="protein sequence ID" value="EDY69891.1"/>
    <property type="status" value="ALT_SEQ"/>
    <property type="molecule type" value="Genomic_DNA"/>
</dbReference>
<dbReference type="STRING" id="46245.B5DHW4"/>
<dbReference type="eggNOG" id="KOG0265">
    <property type="taxonomic scope" value="Eukaryota"/>
</dbReference>
<dbReference type="InParanoid" id="B5DHW4"/>
<dbReference type="ChiTaRS" id="WDY">
    <property type="organism name" value="fly"/>
</dbReference>
<dbReference type="Proteomes" id="UP000001819">
    <property type="component" value="Unplaced"/>
</dbReference>
<dbReference type="Gene3D" id="2.130.10.10">
    <property type="entry name" value="YVTN repeat-like/Quinoprotein amine dehydrogenase"/>
    <property type="match status" value="2"/>
</dbReference>
<dbReference type="InterPro" id="IPR011992">
    <property type="entry name" value="EF-hand-dom_pair"/>
</dbReference>
<dbReference type="InterPro" id="IPR051242">
    <property type="entry name" value="WD-EF-hand_domain"/>
</dbReference>
<dbReference type="InterPro" id="IPR015943">
    <property type="entry name" value="WD40/YVTN_repeat-like_dom_sf"/>
</dbReference>
<dbReference type="InterPro" id="IPR036322">
    <property type="entry name" value="WD40_repeat_dom_sf"/>
</dbReference>
<dbReference type="InterPro" id="IPR001680">
    <property type="entry name" value="WD40_rpt"/>
</dbReference>
<dbReference type="PANTHER" id="PTHR44324:SF6">
    <property type="entry name" value="EF-HAND CALCIUM BINDING DOMAIN 8"/>
    <property type="match status" value="1"/>
</dbReference>
<dbReference type="PANTHER" id="PTHR44324">
    <property type="entry name" value="WD40 REPEAT DOMAIN 95"/>
    <property type="match status" value="1"/>
</dbReference>
<dbReference type="Pfam" id="PF00400">
    <property type="entry name" value="WD40"/>
    <property type="match status" value="2"/>
</dbReference>
<dbReference type="SMART" id="SM00320">
    <property type="entry name" value="WD40"/>
    <property type="match status" value="8"/>
</dbReference>
<dbReference type="SUPFAM" id="SSF47473">
    <property type="entry name" value="EF-hand"/>
    <property type="match status" value="1"/>
</dbReference>
<dbReference type="SUPFAM" id="SSF50978">
    <property type="entry name" value="WD40 repeat-like"/>
    <property type="match status" value="2"/>
</dbReference>
<dbReference type="PROSITE" id="PS00678">
    <property type="entry name" value="WD_REPEATS_1"/>
    <property type="match status" value="1"/>
</dbReference>
<dbReference type="PROSITE" id="PS50082">
    <property type="entry name" value="WD_REPEATS_2"/>
    <property type="match status" value="4"/>
</dbReference>
<dbReference type="PROSITE" id="PS50294">
    <property type="entry name" value="WD_REPEATS_REGION"/>
    <property type="match status" value="1"/>
</dbReference>
<accession>B5DHW4</accession>
<sequence length="1064" mass="121555">MIFNASQDSKTEIEYQTISSTQTYLAEEQSERLHNLISKEQLEKLNQAFNERPDSQVGFDDLRGLLLEQDITFNDAVYNRLFLKINQNRDFMVDWNEFVSYLIFGFQEEDPSSQKESLILPISVAPSVRKTEHRSTVCCVALLKAKSDQVPIEEVTETVNFSFGGEDSPEASGMWVTASHEGMLRFWTSHMEPIRTATSESSKPHAVYCMSYAFYNNGKVHSKLVLGDYAGNVRILSYSPNLRGPFQAKPGAALIEVVWADVLKGKIPQMIPKEYINLHNEMISCVHYSLHMNALFATAEYRNTKKYRGRCPGMIMVTYDERSNFRVPLGVSTFFVAESHNIVVTGGPDTFVRIWDVYIPTEPSAILTGHNGGIVMVFVQPEENKVYSVDYQKIIKVWDLQEHTLLQTYGELVRLIHPSETDMTYFYHSHLRELIVAGRKLISIKCCPRVRVDLTDGNTHAAPVSVVLYNRLFRNIVTCGLDSYIIVWDPWSGRRKIIMKNCHTKMIYGEIIDIEITAATFDPLEQFLLTGARDGTLKIWNYNNAVVVRNMSIMPDQEVTSVIWVVDRILAMGWDRQVTEFNDVEGREYGDPKKWSKFHTDDITCADVKLGEGVVTATYSGEVIFWKLETGQPYRRYSVMDPTRFIELKLTPEEEKLMRRSKRLMSRLGSSRMSRATAITMPKADDGRDYGQNVPISVQAVLFLQTRPQTIQHGSVFISLDTGYIQKVYSHHSRGGYMSQFLSVHKTGDCVLTMCTDRKNRYIYTGTAFGYIKVWHIVNYPEAEKVHVCMPRLRLEFIFMRKEFWVTRAKRVVRHQREPLLVSSYKAHLKAINSIAFINLPKIVFRGSHDYSCRLWTQGGRYLGTLGTVLPWSKLSPFERAGSENQVYRLPPDIKKVASSTTLKVISGVQMDRPAKRAEVKAPEDRDEETAQTDDGYDLKKIFDKPLKEPILGKHFTLPGKSVMDQRIDVDTTQSYIAVYTHLKVHHTEMLERLPTPAVISRVAGENYMDHYVPVEGKVDLSGSALNIKQPPRRNVRPNDPRNMRMAKTRGDMGPGPSPSQQSE</sequence>
<keyword id="KW-1185">Reference proteome</keyword>
<keyword id="KW-0677">Repeat</keyword>
<keyword id="KW-0853">WD repeat</keyword>
<protein>
    <recommendedName>
        <fullName evidence="1">WD repeat-containing protein on Y chromosome</fullName>
        <shortName evidence="1">WD40 Y</shortName>
    </recommendedName>
</protein>
<evidence type="ECO:0000250" key="1">
    <source>
        <dbReference type="UniProtKB" id="B4F7L9"/>
    </source>
</evidence>
<evidence type="ECO:0000255" key="2"/>
<evidence type="ECO:0000256" key="3">
    <source>
        <dbReference type="SAM" id="MobiDB-lite"/>
    </source>
</evidence>
<evidence type="ECO:0000305" key="4"/>
<evidence type="ECO:0000312" key="5">
    <source>
        <dbReference type="EMBL" id="EDY69891.1"/>
    </source>
</evidence>
<proteinExistence type="predicted"/>
<gene>
    <name evidence="1" type="primary">WDY</name>
    <name type="ORF">GA25535</name>
</gene>
<name>WDY_DROPS</name>
<comment type="sequence caution" evidence="4">
    <conflict type="erroneous gene model prediction">
        <sequence resource="EMBL-CDS" id="EDY69891"/>
    </conflict>
</comment>
<reference evidence="5" key="1">
    <citation type="journal article" date="2005" name="Genome Res.">
        <title>Comparative genome sequencing of Drosophila pseudoobscura: chromosomal, gene, and cis-element evolution.</title>
        <authorList>
            <person name="Richards S."/>
            <person name="Liu Y."/>
            <person name="Bettencourt B.R."/>
            <person name="Hradecky P."/>
            <person name="Letovsky S."/>
            <person name="Nielsen R."/>
            <person name="Thornton K."/>
            <person name="Hubisz M.J."/>
            <person name="Chen R."/>
            <person name="Meisel R.P."/>
            <person name="Couronne O."/>
            <person name="Hua S."/>
            <person name="Smith M.A."/>
            <person name="Zhang P."/>
            <person name="Liu J."/>
            <person name="Bussemaker H.J."/>
            <person name="van Batenburg M.F."/>
            <person name="Howells S.L."/>
            <person name="Scherer S.E."/>
            <person name="Sodergren E."/>
            <person name="Matthews B.B."/>
            <person name="Crosby M.A."/>
            <person name="Schroeder A.J."/>
            <person name="Ortiz-Barrientos D."/>
            <person name="Rives C.M."/>
            <person name="Metzker M.L."/>
            <person name="Muzny D.M."/>
            <person name="Scott G."/>
            <person name="Steffen D."/>
            <person name="Wheeler D.A."/>
            <person name="Worley K.C."/>
            <person name="Havlak P."/>
            <person name="Durbin K.J."/>
            <person name="Egan A."/>
            <person name="Gill R."/>
            <person name="Hume J."/>
            <person name="Morgan M.B."/>
            <person name="Miner G."/>
            <person name="Hamilton C."/>
            <person name="Huang Y."/>
            <person name="Waldron L."/>
            <person name="Verduzco D."/>
            <person name="Clerc-Blankenburg K.P."/>
            <person name="Dubchak I."/>
            <person name="Noor M.A.F."/>
            <person name="Anderson W."/>
            <person name="White K.P."/>
            <person name="Clark A.G."/>
            <person name="Schaeffer S.W."/>
            <person name="Gelbart W.M."/>
            <person name="Weinstock G.M."/>
            <person name="Gibbs R.A."/>
        </authorList>
    </citation>
    <scope>NUCLEOTIDE SEQUENCE [LARGE SCALE GENOMIC DNA]</scope>
    <source>
        <strain>MV2-25 / Tucson 14011-0121.94</strain>
    </source>
</reference>